<dbReference type="EMBL" id="CP001050">
    <property type="protein sequence ID" value="ACF30011.1"/>
    <property type="molecule type" value="Genomic_DNA"/>
</dbReference>
<dbReference type="RefSeq" id="WP_002232586.1">
    <property type="nucleotide sequence ID" value="NC_011035.1"/>
</dbReference>
<dbReference type="SMR" id="B4RMH7"/>
<dbReference type="GeneID" id="66752924"/>
<dbReference type="KEGG" id="ngk:NGK_1337"/>
<dbReference type="HOGENOM" id="CLU_078938_4_1_4"/>
<dbReference type="Proteomes" id="UP000002564">
    <property type="component" value="Chromosome"/>
</dbReference>
<dbReference type="GO" id="GO:1990904">
    <property type="term" value="C:ribonucleoprotein complex"/>
    <property type="evidence" value="ECO:0007669"/>
    <property type="project" value="UniProtKB-KW"/>
</dbReference>
<dbReference type="GO" id="GO:0005840">
    <property type="term" value="C:ribosome"/>
    <property type="evidence" value="ECO:0007669"/>
    <property type="project" value="UniProtKB-KW"/>
</dbReference>
<dbReference type="GO" id="GO:0019843">
    <property type="term" value="F:rRNA binding"/>
    <property type="evidence" value="ECO:0007669"/>
    <property type="project" value="UniProtKB-UniRule"/>
</dbReference>
<dbReference type="GO" id="GO:0003735">
    <property type="term" value="F:structural constituent of ribosome"/>
    <property type="evidence" value="ECO:0007669"/>
    <property type="project" value="InterPro"/>
</dbReference>
<dbReference type="GO" id="GO:0006412">
    <property type="term" value="P:translation"/>
    <property type="evidence" value="ECO:0007669"/>
    <property type="project" value="UniProtKB-UniRule"/>
</dbReference>
<dbReference type="FunFam" id="3.10.430.100:FF:000010">
    <property type="entry name" value="50S ribosomal protein L9"/>
    <property type="match status" value="1"/>
</dbReference>
<dbReference type="Gene3D" id="3.10.430.100">
    <property type="entry name" value="Ribosomal protein L9, C-terminal domain"/>
    <property type="match status" value="1"/>
</dbReference>
<dbReference type="Gene3D" id="3.40.5.10">
    <property type="entry name" value="Ribosomal protein L9, N-terminal domain"/>
    <property type="match status" value="1"/>
</dbReference>
<dbReference type="HAMAP" id="MF_00503">
    <property type="entry name" value="Ribosomal_bL9"/>
    <property type="match status" value="1"/>
</dbReference>
<dbReference type="InterPro" id="IPR000244">
    <property type="entry name" value="Ribosomal_bL9"/>
</dbReference>
<dbReference type="InterPro" id="IPR009027">
    <property type="entry name" value="Ribosomal_bL9/RNase_H1_N"/>
</dbReference>
<dbReference type="InterPro" id="IPR020594">
    <property type="entry name" value="Ribosomal_bL9_bac/chp"/>
</dbReference>
<dbReference type="InterPro" id="IPR020069">
    <property type="entry name" value="Ribosomal_bL9_C"/>
</dbReference>
<dbReference type="InterPro" id="IPR036791">
    <property type="entry name" value="Ribosomal_bL9_C_sf"/>
</dbReference>
<dbReference type="InterPro" id="IPR020070">
    <property type="entry name" value="Ribosomal_bL9_N"/>
</dbReference>
<dbReference type="InterPro" id="IPR036935">
    <property type="entry name" value="Ribosomal_bL9_N_sf"/>
</dbReference>
<dbReference type="NCBIfam" id="TIGR00158">
    <property type="entry name" value="L9"/>
    <property type="match status" value="1"/>
</dbReference>
<dbReference type="PANTHER" id="PTHR21368">
    <property type="entry name" value="50S RIBOSOMAL PROTEIN L9"/>
    <property type="match status" value="1"/>
</dbReference>
<dbReference type="Pfam" id="PF03948">
    <property type="entry name" value="Ribosomal_L9_C"/>
    <property type="match status" value="1"/>
</dbReference>
<dbReference type="Pfam" id="PF01281">
    <property type="entry name" value="Ribosomal_L9_N"/>
    <property type="match status" value="1"/>
</dbReference>
<dbReference type="SUPFAM" id="SSF55658">
    <property type="entry name" value="L9 N-domain-like"/>
    <property type="match status" value="1"/>
</dbReference>
<dbReference type="SUPFAM" id="SSF55653">
    <property type="entry name" value="Ribosomal protein L9 C-domain"/>
    <property type="match status" value="1"/>
</dbReference>
<dbReference type="PROSITE" id="PS00651">
    <property type="entry name" value="RIBOSOMAL_L9"/>
    <property type="match status" value="1"/>
</dbReference>
<protein>
    <recommendedName>
        <fullName evidence="1">Large ribosomal subunit protein bL9</fullName>
    </recommendedName>
    <alternativeName>
        <fullName evidence="2">50S ribosomal protein L9</fullName>
    </alternativeName>
</protein>
<organism>
    <name type="scientific">Neisseria gonorrhoeae (strain NCCP11945)</name>
    <dbReference type="NCBI Taxonomy" id="521006"/>
    <lineage>
        <taxon>Bacteria</taxon>
        <taxon>Pseudomonadati</taxon>
        <taxon>Pseudomonadota</taxon>
        <taxon>Betaproteobacteria</taxon>
        <taxon>Neisseriales</taxon>
        <taxon>Neisseriaceae</taxon>
        <taxon>Neisseria</taxon>
    </lineage>
</organism>
<feature type="chain" id="PRO_1000126945" description="Large ribosomal subunit protein bL9">
    <location>
        <begin position="1"/>
        <end position="150"/>
    </location>
</feature>
<sequence length="150" mass="15703">MQIILLEKIGGLGNLGDIVTVKNGYARNFLIPAGKAKRATEANMKEFEARRAELEAKQAEILADARARQEKLDGQTVTVAQKAGVDGRLFGSVTNADIAAAIVAAGIEAVKANVRLPNGPLKAVGEYEVEVALHTDAVAKITVAVIAAAE</sequence>
<accession>B4RMH7</accession>
<keyword id="KW-0687">Ribonucleoprotein</keyword>
<keyword id="KW-0689">Ribosomal protein</keyword>
<keyword id="KW-0694">RNA-binding</keyword>
<keyword id="KW-0699">rRNA-binding</keyword>
<comment type="function">
    <text evidence="1">Binds to the 23S rRNA.</text>
</comment>
<comment type="similarity">
    <text evidence="1">Belongs to the bacterial ribosomal protein bL9 family.</text>
</comment>
<evidence type="ECO:0000255" key="1">
    <source>
        <dbReference type="HAMAP-Rule" id="MF_00503"/>
    </source>
</evidence>
<evidence type="ECO:0000305" key="2"/>
<reference key="1">
    <citation type="journal article" date="2008" name="J. Bacteriol.">
        <title>Complete genome sequence of Neisseria gonorrhoeae NCCP11945.</title>
        <authorList>
            <person name="Chung G.T."/>
            <person name="Yoo J.S."/>
            <person name="Oh H.B."/>
            <person name="Lee Y.S."/>
            <person name="Cha S.H."/>
            <person name="Kim S.J."/>
            <person name="Yoo C.K."/>
        </authorList>
    </citation>
    <scope>NUCLEOTIDE SEQUENCE [LARGE SCALE GENOMIC DNA]</scope>
    <source>
        <strain>NCCP11945</strain>
    </source>
</reference>
<gene>
    <name evidence="1" type="primary">rplI</name>
    <name type="ordered locus">NGK_1337</name>
</gene>
<proteinExistence type="inferred from homology"/>
<name>RL9_NEIG2</name>